<comment type="function">
    <text evidence="1">Catalyzes the transfer of the diacylglyceryl group from phosphatidylglycerol to the sulfhydryl group of the N-terminal cysteine of a prolipoprotein, the first step in the formation of mature lipoproteins.</text>
</comment>
<comment type="catalytic activity">
    <reaction evidence="1">
        <text>L-cysteinyl-[prolipoprotein] + a 1,2-diacyl-sn-glycero-3-phospho-(1'-sn-glycerol) = an S-1,2-diacyl-sn-glyceryl-L-cysteinyl-[prolipoprotein] + sn-glycerol 1-phosphate + H(+)</text>
        <dbReference type="Rhea" id="RHEA:56712"/>
        <dbReference type="Rhea" id="RHEA-COMP:14679"/>
        <dbReference type="Rhea" id="RHEA-COMP:14680"/>
        <dbReference type="ChEBI" id="CHEBI:15378"/>
        <dbReference type="ChEBI" id="CHEBI:29950"/>
        <dbReference type="ChEBI" id="CHEBI:57685"/>
        <dbReference type="ChEBI" id="CHEBI:64716"/>
        <dbReference type="ChEBI" id="CHEBI:140658"/>
        <dbReference type="EC" id="2.5.1.145"/>
    </reaction>
</comment>
<comment type="pathway">
    <text evidence="1">Protein modification; lipoprotein biosynthesis (diacylglyceryl transfer).</text>
</comment>
<comment type="subcellular location">
    <subcellularLocation>
        <location evidence="1">Cell membrane</location>
        <topology evidence="1">Multi-pass membrane protein</topology>
    </subcellularLocation>
</comment>
<comment type="similarity">
    <text evidence="1">Belongs to the Lgt family.</text>
</comment>
<sequence>MINQGIKAALNPIAFQGGPFTIHWYGVIIASGVVLALLLAVREGKREGIPEDDFYDYLLWALPIAIICARIYYVVFQWSYYSQHPSEIIAIWDGGIAIYGAILGGFIVLLVFCHYRHLSSWLMMDIIAPTLIMAQGIGRWGNFMNQEAFGDITTRAHLMAQHIPNWIINQMYIGGHYRIPTFLYESLWDLTGFALLMLLRHRKHLFRRGEIFLTYVMWYAFGRFFIEGMRTDSLMLGSIRISQLLSIVFFVSALIILIIRRHKNIPWYYNGINKN</sequence>
<keyword id="KW-1003">Cell membrane</keyword>
<keyword id="KW-0472">Membrane</keyword>
<keyword id="KW-0808">Transferase</keyword>
<keyword id="KW-0812">Transmembrane</keyword>
<keyword id="KW-1133">Transmembrane helix</keyword>
<feature type="chain" id="PRO_1000137436" description="Phosphatidylglycerol--prolipoprotein diacylglyceryl transferase">
    <location>
        <begin position="1"/>
        <end position="275"/>
    </location>
</feature>
<feature type="transmembrane region" description="Helical" evidence="1">
    <location>
        <begin position="20"/>
        <end position="40"/>
    </location>
</feature>
<feature type="transmembrane region" description="Helical" evidence="1">
    <location>
        <begin position="58"/>
        <end position="78"/>
    </location>
</feature>
<feature type="transmembrane region" description="Helical" evidence="1">
    <location>
        <begin position="88"/>
        <end position="108"/>
    </location>
</feature>
<feature type="transmembrane region" description="Helical" evidence="1">
    <location>
        <begin position="118"/>
        <end position="138"/>
    </location>
</feature>
<feature type="transmembrane region" description="Helical" evidence="1">
    <location>
        <begin position="209"/>
        <end position="229"/>
    </location>
</feature>
<feature type="transmembrane region" description="Helical" evidence="1">
    <location>
        <begin position="239"/>
        <end position="259"/>
    </location>
</feature>
<feature type="binding site" evidence="1">
    <location>
        <position position="139"/>
    </location>
    <ligand>
        <name>a 1,2-diacyl-sn-glycero-3-phospho-(1'-sn-glycerol)</name>
        <dbReference type="ChEBI" id="CHEBI:64716"/>
    </ligand>
</feature>
<reference key="1">
    <citation type="journal article" date="2008" name="DNA Res.">
        <title>Comparative genome analysis of Lactobacillus reuteri and Lactobacillus fermentum reveal a genomic island for reuterin and cobalamin production.</title>
        <authorList>
            <person name="Morita H."/>
            <person name="Toh H."/>
            <person name="Fukuda S."/>
            <person name="Horikawa H."/>
            <person name="Oshima K."/>
            <person name="Suzuki T."/>
            <person name="Murakami M."/>
            <person name="Hisamatsu S."/>
            <person name="Kato Y."/>
            <person name="Takizawa T."/>
            <person name="Fukuoka H."/>
            <person name="Yoshimura T."/>
            <person name="Itoh K."/>
            <person name="O'Sullivan D.J."/>
            <person name="McKay L.L."/>
            <person name="Ohno H."/>
            <person name="Kikuchi J."/>
            <person name="Masaoka T."/>
            <person name="Hattori M."/>
        </authorList>
    </citation>
    <scope>NUCLEOTIDE SEQUENCE [LARGE SCALE GENOMIC DNA]</scope>
    <source>
        <strain>JCM 1112</strain>
    </source>
</reference>
<proteinExistence type="inferred from homology"/>
<dbReference type="EC" id="2.5.1.145" evidence="1"/>
<dbReference type="EMBL" id="AP007281">
    <property type="protein sequence ID" value="BAG24875.1"/>
    <property type="molecule type" value="Genomic_DNA"/>
</dbReference>
<dbReference type="RefSeq" id="WP_003667441.1">
    <property type="nucleotide sequence ID" value="NC_010609.1"/>
</dbReference>
<dbReference type="SMR" id="B2G5Z3"/>
<dbReference type="KEGG" id="lrf:LAR_0359"/>
<dbReference type="HOGENOM" id="CLU_013386_1_2_9"/>
<dbReference type="UniPathway" id="UPA00664"/>
<dbReference type="GO" id="GO:0005886">
    <property type="term" value="C:plasma membrane"/>
    <property type="evidence" value="ECO:0007669"/>
    <property type="project" value="UniProtKB-SubCell"/>
</dbReference>
<dbReference type="GO" id="GO:0008961">
    <property type="term" value="F:phosphatidylglycerol-prolipoprotein diacylglyceryl transferase activity"/>
    <property type="evidence" value="ECO:0007669"/>
    <property type="project" value="UniProtKB-UniRule"/>
</dbReference>
<dbReference type="GO" id="GO:0042158">
    <property type="term" value="P:lipoprotein biosynthetic process"/>
    <property type="evidence" value="ECO:0007669"/>
    <property type="project" value="UniProtKB-UniRule"/>
</dbReference>
<dbReference type="HAMAP" id="MF_01147">
    <property type="entry name" value="Lgt"/>
    <property type="match status" value="1"/>
</dbReference>
<dbReference type="InterPro" id="IPR001640">
    <property type="entry name" value="Lgt"/>
</dbReference>
<dbReference type="NCBIfam" id="TIGR00544">
    <property type="entry name" value="lgt"/>
    <property type="match status" value="1"/>
</dbReference>
<dbReference type="PANTHER" id="PTHR30589:SF0">
    <property type="entry name" value="PHOSPHATIDYLGLYCEROL--PROLIPOPROTEIN DIACYLGLYCERYL TRANSFERASE"/>
    <property type="match status" value="1"/>
</dbReference>
<dbReference type="PANTHER" id="PTHR30589">
    <property type="entry name" value="PROLIPOPROTEIN DIACYLGLYCERYL TRANSFERASE"/>
    <property type="match status" value="1"/>
</dbReference>
<dbReference type="Pfam" id="PF01790">
    <property type="entry name" value="LGT"/>
    <property type="match status" value="1"/>
</dbReference>
<dbReference type="PROSITE" id="PS01311">
    <property type="entry name" value="LGT"/>
    <property type="match status" value="1"/>
</dbReference>
<gene>
    <name evidence="1" type="primary">lgt</name>
    <name type="ordered locus">LAR_0359</name>
</gene>
<organism>
    <name type="scientific">Limosilactobacillus reuteri subsp. reuteri (strain JCM 1112)</name>
    <name type="common">Lactobacillus reuteri</name>
    <dbReference type="NCBI Taxonomy" id="557433"/>
    <lineage>
        <taxon>Bacteria</taxon>
        <taxon>Bacillati</taxon>
        <taxon>Bacillota</taxon>
        <taxon>Bacilli</taxon>
        <taxon>Lactobacillales</taxon>
        <taxon>Lactobacillaceae</taxon>
        <taxon>Limosilactobacillus</taxon>
    </lineage>
</organism>
<accession>B2G5Z3</accession>
<protein>
    <recommendedName>
        <fullName evidence="1">Phosphatidylglycerol--prolipoprotein diacylglyceryl transferase</fullName>
        <ecNumber evidence="1">2.5.1.145</ecNumber>
    </recommendedName>
</protein>
<name>LGT_LIMRJ</name>
<evidence type="ECO:0000255" key="1">
    <source>
        <dbReference type="HAMAP-Rule" id="MF_01147"/>
    </source>
</evidence>